<evidence type="ECO:0000255" key="1"/>
<evidence type="ECO:0000269" key="2">
    <source>
    </source>
</evidence>
<evidence type="ECO:0000305" key="3"/>
<reference key="1">
    <citation type="journal article" date="2002" name="Plant Mol. Biol.">
        <title>AtHVA22 gene family in Arabidopsis: phylogenetic relationship, ABA and stress regulation, and tissue-specific expression.</title>
        <authorList>
            <person name="Chen C.-N."/>
            <person name="Chu C.-C."/>
            <person name="Zentella R."/>
            <person name="Pan S.-M."/>
            <person name="Ho T.-H.D."/>
        </authorList>
    </citation>
    <scope>NUCLEOTIDE SEQUENCE [GENOMIC DNA / MRNA]</scope>
    <scope>TISSUE SPECIFICITY</scope>
    <scope>INDUCTION</scope>
    <source>
        <strain>cv. Columbia</strain>
    </source>
</reference>
<reference key="2">
    <citation type="journal article" date="1998" name="DNA Res.">
        <title>Structural analysis of Arabidopsis thaliana chromosome 5. VII. Sequence features of the regions of 1,013,767 bp covered by sixteen physically assigned P1 and TAC clones.</title>
        <authorList>
            <person name="Nakamura Y."/>
            <person name="Sato S."/>
            <person name="Asamizu E."/>
            <person name="Kaneko T."/>
            <person name="Kotani H."/>
            <person name="Miyajima N."/>
            <person name="Tabata S."/>
        </authorList>
    </citation>
    <scope>NUCLEOTIDE SEQUENCE [LARGE SCALE GENOMIC DNA]</scope>
    <source>
        <strain>cv. Columbia</strain>
    </source>
</reference>
<reference key="3">
    <citation type="journal article" date="2017" name="Plant J.">
        <title>Araport11: a complete reannotation of the Arabidopsis thaliana reference genome.</title>
        <authorList>
            <person name="Cheng C.Y."/>
            <person name="Krishnakumar V."/>
            <person name="Chan A.P."/>
            <person name="Thibaud-Nissen F."/>
            <person name="Schobel S."/>
            <person name="Town C.D."/>
        </authorList>
    </citation>
    <scope>GENOME REANNOTATION</scope>
    <source>
        <strain>cv. Columbia</strain>
    </source>
</reference>
<reference key="4">
    <citation type="journal article" date="2002" name="Science">
        <title>Functional annotation of a full-length Arabidopsis cDNA collection.</title>
        <authorList>
            <person name="Seki M."/>
            <person name="Narusaka M."/>
            <person name="Kamiya A."/>
            <person name="Ishida J."/>
            <person name="Satou M."/>
            <person name="Sakurai T."/>
            <person name="Nakajima M."/>
            <person name="Enju A."/>
            <person name="Akiyama K."/>
            <person name="Oono Y."/>
            <person name="Muramatsu M."/>
            <person name="Hayashizaki Y."/>
            <person name="Kawai J."/>
            <person name="Carninci P."/>
            <person name="Itoh M."/>
            <person name="Ishii Y."/>
            <person name="Arakawa T."/>
            <person name="Shibata K."/>
            <person name="Shinagawa A."/>
            <person name="Shinozaki K."/>
        </authorList>
    </citation>
    <scope>NUCLEOTIDE SEQUENCE [LARGE SCALE MRNA]</scope>
    <source>
        <strain>cv. Columbia</strain>
    </source>
</reference>
<reference key="5">
    <citation type="journal article" date="2003" name="Science">
        <title>Empirical analysis of transcriptional activity in the Arabidopsis genome.</title>
        <authorList>
            <person name="Yamada K."/>
            <person name="Lim J."/>
            <person name="Dale J.M."/>
            <person name="Chen H."/>
            <person name="Shinn P."/>
            <person name="Palm C.J."/>
            <person name="Southwick A.M."/>
            <person name="Wu H.C."/>
            <person name="Kim C.J."/>
            <person name="Nguyen M."/>
            <person name="Pham P.K."/>
            <person name="Cheuk R.F."/>
            <person name="Karlin-Newmann G."/>
            <person name="Liu S.X."/>
            <person name="Lam B."/>
            <person name="Sakano H."/>
            <person name="Wu T."/>
            <person name="Yu G."/>
            <person name="Miranda M."/>
            <person name="Quach H.L."/>
            <person name="Tripp M."/>
            <person name="Chang C.H."/>
            <person name="Lee J.M."/>
            <person name="Toriumi M.J."/>
            <person name="Chan M.M."/>
            <person name="Tang C.C."/>
            <person name="Onodera C.S."/>
            <person name="Deng J.M."/>
            <person name="Akiyama K."/>
            <person name="Ansari Y."/>
            <person name="Arakawa T."/>
            <person name="Banh J."/>
            <person name="Banno F."/>
            <person name="Bowser L."/>
            <person name="Brooks S.Y."/>
            <person name="Carninci P."/>
            <person name="Chao Q."/>
            <person name="Choy N."/>
            <person name="Enju A."/>
            <person name="Goldsmith A.D."/>
            <person name="Gurjal M."/>
            <person name="Hansen N.F."/>
            <person name="Hayashizaki Y."/>
            <person name="Johnson-Hopson C."/>
            <person name="Hsuan V.W."/>
            <person name="Iida K."/>
            <person name="Karnes M."/>
            <person name="Khan S."/>
            <person name="Koesema E."/>
            <person name="Ishida J."/>
            <person name="Jiang P.X."/>
            <person name="Jones T."/>
            <person name="Kawai J."/>
            <person name="Kamiya A."/>
            <person name="Meyers C."/>
            <person name="Nakajima M."/>
            <person name="Narusaka M."/>
            <person name="Seki M."/>
            <person name="Sakurai T."/>
            <person name="Satou M."/>
            <person name="Tamse R."/>
            <person name="Vaysberg M."/>
            <person name="Wallender E.K."/>
            <person name="Wong C."/>
            <person name="Yamamura Y."/>
            <person name="Yuan S."/>
            <person name="Shinozaki K."/>
            <person name="Davis R.W."/>
            <person name="Theologis A."/>
            <person name="Ecker J.R."/>
        </authorList>
    </citation>
    <scope>NUCLEOTIDE SEQUENCE [LARGE SCALE MRNA]</scope>
    <source>
        <strain>cv. Columbia</strain>
    </source>
</reference>
<gene>
    <name type="primary">HVA22B</name>
    <name type="ordered locus">At5g62490</name>
    <name type="ORF">K19B1.10</name>
</gene>
<name>HA22B_ARATH</name>
<keyword id="KW-0472">Membrane</keyword>
<keyword id="KW-1185">Reference proteome</keyword>
<keyword id="KW-0346">Stress response</keyword>
<keyword id="KW-0812">Transmembrane</keyword>
<keyword id="KW-1133">Transmembrane helix</keyword>
<proteinExistence type="evidence at transcript level"/>
<protein>
    <recommendedName>
        <fullName>HVA22-like protein b</fullName>
        <shortName>AtHVA22b</shortName>
    </recommendedName>
</protein>
<dbReference type="EMBL" id="AF141660">
    <property type="protein sequence ID" value="AAD31880.1"/>
    <property type="molecule type" value="mRNA"/>
</dbReference>
<dbReference type="EMBL" id="AF141980">
    <property type="protein sequence ID" value="AAD31884.1"/>
    <property type="molecule type" value="Genomic_DNA"/>
</dbReference>
<dbReference type="EMBL" id="AB015469">
    <property type="protein sequence ID" value="BAB11499.1"/>
    <property type="molecule type" value="Genomic_DNA"/>
</dbReference>
<dbReference type="EMBL" id="CP002688">
    <property type="protein sequence ID" value="AED97614.1"/>
    <property type="molecule type" value="Genomic_DNA"/>
</dbReference>
<dbReference type="EMBL" id="AK118234">
    <property type="protein sequence ID" value="BAC42853.1"/>
    <property type="molecule type" value="mRNA"/>
</dbReference>
<dbReference type="EMBL" id="BT005579">
    <property type="protein sequence ID" value="AAO63999.1"/>
    <property type="molecule type" value="mRNA"/>
</dbReference>
<dbReference type="RefSeq" id="NP_201055.1">
    <property type="nucleotide sequence ID" value="NM_125643.5"/>
</dbReference>
<dbReference type="FunCoup" id="Q9SYX7">
    <property type="interactions" value="519"/>
</dbReference>
<dbReference type="STRING" id="3702.Q9SYX7"/>
<dbReference type="PaxDb" id="3702-AT5G62490.1"/>
<dbReference type="ProteomicsDB" id="247351"/>
<dbReference type="EnsemblPlants" id="AT5G62490.1">
    <property type="protein sequence ID" value="AT5G62490.1"/>
    <property type="gene ID" value="AT5G62490"/>
</dbReference>
<dbReference type="GeneID" id="836369"/>
<dbReference type="Gramene" id="AT5G62490.1">
    <property type="protein sequence ID" value="AT5G62490.1"/>
    <property type="gene ID" value="AT5G62490"/>
</dbReference>
<dbReference type="KEGG" id="ath:AT5G62490"/>
<dbReference type="Araport" id="AT5G62490"/>
<dbReference type="TAIR" id="AT5G62490">
    <property type="gene designation" value="HVA22B"/>
</dbReference>
<dbReference type="eggNOG" id="KOG1725">
    <property type="taxonomic scope" value="Eukaryota"/>
</dbReference>
<dbReference type="HOGENOM" id="CLU_098452_0_0_1"/>
<dbReference type="InParanoid" id="Q9SYX7"/>
<dbReference type="OMA" id="PHSVNIW"/>
<dbReference type="OrthoDB" id="10009287at2759"/>
<dbReference type="PhylomeDB" id="Q9SYX7"/>
<dbReference type="PRO" id="PR:Q9SYX7"/>
<dbReference type="Proteomes" id="UP000006548">
    <property type="component" value="Chromosome 5"/>
</dbReference>
<dbReference type="ExpressionAtlas" id="Q9SYX7">
    <property type="expression patterns" value="baseline and differential"/>
</dbReference>
<dbReference type="GO" id="GO:0016020">
    <property type="term" value="C:membrane"/>
    <property type="evidence" value="ECO:0007669"/>
    <property type="project" value="UniProtKB-SubCell"/>
</dbReference>
<dbReference type="GO" id="GO:0042538">
    <property type="term" value="P:hyperosmotic salinity response"/>
    <property type="evidence" value="ECO:0000270"/>
    <property type="project" value="TAIR"/>
</dbReference>
<dbReference type="GO" id="GO:0009737">
    <property type="term" value="P:response to abscisic acid"/>
    <property type="evidence" value="ECO:0000270"/>
    <property type="project" value="TAIR"/>
</dbReference>
<dbReference type="InterPro" id="IPR004345">
    <property type="entry name" value="TB2_DP1_HVA22"/>
</dbReference>
<dbReference type="PANTHER" id="PTHR12300:SF119">
    <property type="entry name" value="HVA22-LIKE PROTEIN B"/>
    <property type="match status" value="1"/>
</dbReference>
<dbReference type="PANTHER" id="PTHR12300">
    <property type="entry name" value="HVA22-LIKE PROTEINS"/>
    <property type="match status" value="1"/>
</dbReference>
<dbReference type="Pfam" id="PF03134">
    <property type="entry name" value="TB2_DP1_HVA22"/>
    <property type="match status" value="1"/>
</dbReference>
<feature type="chain" id="PRO_0000101836" description="HVA22-like protein b">
    <location>
        <begin position="1"/>
        <end position="167"/>
    </location>
</feature>
<feature type="transmembrane region" description="Helical" evidence="1">
    <location>
        <begin position="18"/>
        <end position="38"/>
    </location>
</feature>
<feature type="transmembrane region" description="Helical" evidence="1">
    <location>
        <begin position="47"/>
        <end position="67"/>
    </location>
</feature>
<feature type="transmembrane region" description="Helical" evidence="1">
    <location>
        <begin position="68"/>
        <end position="88"/>
    </location>
</feature>
<feature type="sequence conflict" description="In Ref. 1; AAD31880." evidence="3" ref="1">
    <original>V</original>
    <variation>M</variation>
    <location>
        <position position="23"/>
    </location>
</feature>
<comment type="subcellular location">
    <subcellularLocation>
        <location evidence="3">Membrane</location>
        <topology evidence="3">Multi-pass membrane protein</topology>
    </subcellularLocation>
</comment>
<comment type="tissue specificity">
    <text evidence="2">Predominantly expressed in flower buds.</text>
</comment>
<comment type="induction">
    <text evidence="2">By abscisic acid (ABA) and salt stresses.</text>
</comment>
<comment type="similarity">
    <text evidence="3">Belongs to the DP1 family.</text>
</comment>
<organism>
    <name type="scientific">Arabidopsis thaliana</name>
    <name type="common">Mouse-ear cress</name>
    <dbReference type="NCBI Taxonomy" id="3702"/>
    <lineage>
        <taxon>Eukaryota</taxon>
        <taxon>Viridiplantae</taxon>
        <taxon>Streptophyta</taxon>
        <taxon>Embryophyta</taxon>
        <taxon>Tracheophyta</taxon>
        <taxon>Spermatophyta</taxon>
        <taxon>Magnoliopsida</taxon>
        <taxon>eudicotyledons</taxon>
        <taxon>Gunneridae</taxon>
        <taxon>Pentapetalae</taxon>
        <taxon>rosids</taxon>
        <taxon>malvids</taxon>
        <taxon>Brassicales</taxon>
        <taxon>Brassicaceae</taxon>
        <taxon>Camelineae</taxon>
        <taxon>Arabidopsis</taxon>
    </lineage>
</organism>
<accession>Q9SYX7</accession>
<accession>Q9XFG2</accession>
<sequence>MSSGIGSLVKVIFKNFDVIAGPVISLVYPLYASVRAIESRSHGDDKQWLTYWALYSLIKLFELTFFRLLEWIPLYPYAKLALTSWLVLPGMNGAAYLYEHYVRSFLLSPHTVNVWYVPAKKDDDLGATAGKFTPVNDSGAPQEKIVSSVDTSAKYVGHSAFDDAYIY</sequence>